<dbReference type="EC" id="6.1.1.14" evidence="1"/>
<dbReference type="EMBL" id="AP009049">
    <property type="protein sequence ID" value="BAH05199.1"/>
    <property type="molecule type" value="Genomic_DNA"/>
</dbReference>
<dbReference type="RefSeq" id="WP_011988769.1">
    <property type="nucleotide sequence ID" value="NC_011837.1"/>
</dbReference>
<dbReference type="SMR" id="B9DY74"/>
<dbReference type="KEGG" id="ckr:CKR_0148"/>
<dbReference type="HOGENOM" id="CLU_015515_2_1_9"/>
<dbReference type="Proteomes" id="UP000007969">
    <property type="component" value="Chromosome"/>
</dbReference>
<dbReference type="GO" id="GO:0005737">
    <property type="term" value="C:cytoplasm"/>
    <property type="evidence" value="ECO:0007669"/>
    <property type="project" value="UniProtKB-SubCell"/>
</dbReference>
<dbReference type="GO" id="GO:0005524">
    <property type="term" value="F:ATP binding"/>
    <property type="evidence" value="ECO:0007669"/>
    <property type="project" value="UniProtKB-UniRule"/>
</dbReference>
<dbReference type="GO" id="GO:0140096">
    <property type="term" value="F:catalytic activity, acting on a protein"/>
    <property type="evidence" value="ECO:0007669"/>
    <property type="project" value="UniProtKB-ARBA"/>
</dbReference>
<dbReference type="GO" id="GO:0004820">
    <property type="term" value="F:glycine-tRNA ligase activity"/>
    <property type="evidence" value="ECO:0000250"/>
    <property type="project" value="UniProtKB"/>
</dbReference>
<dbReference type="GO" id="GO:0046983">
    <property type="term" value="F:protein dimerization activity"/>
    <property type="evidence" value="ECO:0000250"/>
    <property type="project" value="UniProtKB"/>
</dbReference>
<dbReference type="GO" id="GO:0016740">
    <property type="term" value="F:transferase activity"/>
    <property type="evidence" value="ECO:0007669"/>
    <property type="project" value="UniProtKB-ARBA"/>
</dbReference>
<dbReference type="GO" id="GO:0006426">
    <property type="term" value="P:glycyl-tRNA aminoacylation"/>
    <property type="evidence" value="ECO:0007669"/>
    <property type="project" value="UniProtKB-UniRule"/>
</dbReference>
<dbReference type="CDD" id="cd00774">
    <property type="entry name" value="GlyRS-like_core"/>
    <property type="match status" value="1"/>
</dbReference>
<dbReference type="CDD" id="cd00858">
    <property type="entry name" value="GlyRS_anticodon"/>
    <property type="match status" value="1"/>
</dbReference>
<dbReference type="FunFam" id="3.40.50.800:FF:000002">
    <property type="entry name" value="Glycine--tRNA ligase"/>
    <property type="match status" value="1"/>
</dbReference>
<dbReference type="Gene3D" id="3.40.50.800">
    <property type="entry name" value="Anticodon-binding domain"/>
    <property type="match status" value="1"/>
</dbReference>
<dbReference type="Gene3D" id="3.30.930.10">
    <property type="entry name" value="Bira Bifunctional Protein, Domain 2"/>
    <property type="match status" value="1"/>
</dbReference>
<dbReference type="HAMAP" id="MF_00253_B">
    <property type="entry name" value="Gly_tRNA_synth_B"/>
    <property type="match status" value="1"/>
</dbReference>
<dbReference type="InterPro" id="IPR002314">
    <property type="entry name" value="aa-tRNA-synt_IIb"/>
</dbReference>
<dbReference type="InterPro" id="IPR006195">
    <property type="entry name" value="aa-tRNA-synth_II"/>
</dbReference>
<dbReference type="InterPro" id="IPR045864">
    <property type="entry name" value="aa-tRNA-synth_II/BPL/LPL"/>
</dbReference>
<dbReference type="InterPro" id="IPR004154">
    <property type="entry name" value="Anticodon-bd"/>
</dbReference>
<dbReference type="InterPro" id="IPR036621">
    <property type="entry name" value="Anticodon-bd_dom_sf"/>
</dbReference>
<dbReference type="InterPro" id="IPR027031">
    <property type="entry name" value="Gly-tRNA_synthase/POLG2"/>
</dbReference>
<dbReference type="InterPro" id="IPR022961">
    <property type="entry name" value="Gly_tRNA_ligase_bac"/>
</dbReference>
<dbReference type="InterPro" id="IPR033731">
    <property type="entry name" value="GlyRS-like_core"/>
</dbReference>
<dbReference type="InterPro" id="IPR002315">
    <property type="entry name" value="tRNA-synt_gly"/>
</dbReference>
<dbReference type="NCBIfam" id="TIGR00389">
    <property type="entry name" value="glyS_dimeric"/>
    <property type="match status" value="1"/>
</dbReference>
<dbReference type="NCBIfam" id="NF003211">
    <property type="entry name" value="PRK04173.1"/>
    <property type="match status" value="1"/>
</dbReference>
<dbReference type="PANTHER" id="PTHR10745:SF8">
    <property type="entry name" value="DNA POLYMERASE SUBUNIT GAMMA-2, MITOCHONDRIAL"/>
    <property type="match status" value="1"/>
</dbReference>
<dbReference type="PANTHER" id="PTHR10745">
    <property type="entry name" value="GLYCYL-TRNA SYNTHETASE/DNA POLYMERASE SUBUNIT GAMMA-2"/>
    <property type="match status" value="1"/>
</dbReference>
<dbReference type="Pfam" id="PF03129">
    <property type="entry name" value="HGTP_anticodon"/>
    <property type="match status" value="1"/>
</dbReference>
<dbReference type="Pfam" id="PF00587">
    <property type="entry name" value="tRNA-synt_2b"/>
    <property type="match status" value="1"/>
</dbReference>
<dbReference type="PRINTS" id="PR01043">
    <property type="entry name" value="TRNASYNTHGLY"/>
</dbReference>
<dbReference type="SUPFAM" id="SSF52954">
    <property type="entry name" value="Class II aaRS ABD-related"/>
    <property type="match status" value="1"/>
</dbReference>
<dbReference type="SUPFAM" id="SSF55681">
    <property type="entry name" value="Class II aaRS and biotin synthetases"/>
    <property type="match status" value="1"/>
</dbReference>
<dbReference type="PROSITE" id="PS50862">
    <property type="entry name" value="AA_TRNA_LIGASE_II"/>
    <property type="match status" value="1"/>
</dbReference>
<evidence type="ECO:0000255" key="1">
    <source>
        <dbReference type="HAMAP-Rule" id="MF_00253"/>
    </source>
</evidence>
<reference key="1">
    <citation type="submission" date="2005-09" db="EMBL/GenBank/DDBJ databases">
        <title>Complete genome sequence of Clostridium kluyveri and comparative genomics of Clostridia species.</title>
        <authorList>
            <person name="Inui M."/>
            <person name="Nonaka H."/>
            <person name="Shinoda Y."/>
            <person name="Ikenaga Y."/>
            <person name="Abe M."/>
            <person name="Naito K."/>
            <person name="Vertes A.A."/>
            <person name="Yukawa H."/>
        </authorList>
    </citation>
    <scope>NUCLEOTIDE SEQUENCE [LARGE SCALE GENOMIC DNA]</scope>
    <source>
        <strain>NBRC 12016</strain>
    </source>
</reference>
<feature type="chain" id="PRO_1000125529" description="Glycine--tRNA ligase">
    <location>
        <begin position="1"/>
        <end position="463"/>
    </location>
</feature>
<feature type="binding site" evidence="1">
    <location>
        <position position="100"/>
    </location>
    <ligand>
        <name>substrate</name>
    </ligand>
</feature>
<feature type="binding site" evidence="1">
    <location>
        <position position="175"/>
    </location>
    <ligand>
        <name>substrate</name>
    </ligand>
</feature>
<feature type="binding site" evidence="1">
    <location>
        <begin position="207"/>
        <end position="209"/>
    </location>
    <ligand>
        <name>ATP</name>
        <dbReference type="ChEBI" id="CHEBI:30616"/>
    </ligand>
</feature>
<feature type="binding site" evidence="1">
    <location>
        <begin position="217"/>
        <end position="222"/>
    </location>
    <ligand>
        <name>ATP</name>
        <dbReference type="ChEBI" id="CHEBI:30616"/>
    </ligand>
</feature>
<feature type="binding site" evidence="1">
    <location>
        <begin position="222"/>
        <end position="226"/>
    </location>
    <ligand>
        <name>substrate</name>
    </ligand>
</feature>
<feature type="binding site" evidence="1">
    <location>
        <begin position="291"/>
        <end position="292"/>
    </location>
    <ligand>
        <name>ATP</name>
        <dbReference type="ChEBI" id="CHEBI:30616"/>
    </ligand>
</feature>
<feature type="binding site" evidence="1">
    <location>
        <begin position="331"/>
        <end position="335"/>
    </location>
    <ligand>
        <name>substrate</name>
    </ligand>
</feature>
<feature type="binding site" evidence="1">
    <location>
        <begin position="335"/>
        <end position="338"/>
    </location>
    <ligand>
        <name>ATP</name>
        <dbReference type="ChEBI" id="CHEBI:30616"/>
    </ligand>
</feature>
<keyword id="KW-0030">Aminoacyl-tRNA synthetase</keyword>
<keyword id="KW-0067">ATP-binding</keyword>
<keyword id="KW-0963">Cytoplasm</keyword>
<keyword id="KW-0436">Ligase</keyword>
<keyword id="KW-0547">Nucleotide-binding</keyword>
<keyword id="KW-0648">Protein biosynthesis</keyword>
<proteinExistence type="inferred from homology"/>
<gene>
    <name evidence="1" type="primary">glyQS</name>
    <name type="ordered locus">CKR_0148</name>
</gene>
<name>SYG_CLOK1</name>
<organism>
    <name type="scientific">Clostridium kluyveri (strain NBRC 12016)</name>
    <dbReference type="NCBI Taxonomy" id="583346"/>
    <lineage>
        <taxon>Bacteria</taxon>
        <taxon>Bacillati</taxon>
        <taxon>Bacillota</taxon>
        <taxon>Clostridia</taxon>
        <taxon>Eubacteriales</taxon>
        <taxon>Clostridiaceae</taxon>
        <taxon>Clostridium</taxon>
    </lineage>
</organism>
<comment type="function">
    <text evidence="1">Catalyzes the attachment of glycine to tRNA(Gly).</text>
</comment>
<comment type="catalytic activity">
    <reaction evidence="1">
        <text>tRNA(Gly) + glycine + ATP = glycyl-tRNA(Gly) + AMP + diphosphate</text>
        <dbReference type="Rhea" id="RHEA:16013"/>
        <dbReference type="Rhea" id="RHEA-COMP:9664"/>
        <dbReference type="Rhea" id="RHEA-COMP:9683"/>
        <dbReference type="ChEBI" id="CHEBI:30616"/>
        <dbReference type="ChEBI" id="CHEBI:33019"/>
        <dbReference type="ChEBI" id="CHEBI:57305"/>
        <dbReference type="ChEBI" id="CHEBI:78442"/>
        <dbReference type="ChEBI" id="CHEBI:78522"/>
        <dbReference type="ChEBI" id="CHEBI:456215"/>
        <dbReference type="EC" id="6.1.1.14"/>
    </reaction>
</comment>
<comment type="subunit">
    <text evidence="1">Homodimer.</text>
</comment>
<comment type="subcellular location">
    <subcellularLocation>
        <location evidence="1">Cytoplasm</location>
    </subcellularLocation>
</comment>
<comment type="similarity">
    <text evidence="1">Belongs to the class-II aminoacyl-tRNA synthetase family.</text>
</comment>
<sequence length="463" mass="53923">MPFEKTMDKIVALAKNRGFVYPGSDIYGGLANTWDYGPIGVELKNNVKKAWWQKFVHESQYNVGIDCAILMNNEVWVASGHVGNFSDPLMDCKECKSRFRADKLVEEHMTSKGVEKASADGWNNEKLKEYIDDNNIVCPDCGKTNFTDIRQFNLMFKTFQGVTEDSKAEIYLRPETAQGIFVNFKNVQRTSRKKIPFGIAQIGKAFRNEITPGNFTFRTREFEQMELEFFCEPGTDLEWHNYWKEYCWKFLLKLGIKEENIRFRVHEKEELSHYSNATSDIEYLFPFGWGELWGIADRTDYDLTQHQNRSGKDMTYLNPVTNERYIPYCIEPSVGADRAVLAFLVDAYDEEELEGGDVRTVMHFHPAIAPFKVAILPLSKKLSEKALDVYNMLRKDFNVDYDDAGSIGKRYRREDEIGTPYCITIDFDTMDNDTVTIRDRDTMKQFRVKIDELKDFIKEKIQF</sequence>
<accession>B9DY74</accession>
<protein>
    <recommendedName>
        <fullName evidence="1">Glycine--tRNA ligase</fullName>
        <ecNumber evidence="1">6.1.1.14</ecNumber>
    </recommendedName>
    <alternativeName>
        <fullName evidence="1">Glycyl-tRNA synthetase</fullName>
        <shortName evidence="1">GlyRS</shortName>
    </alternativeName>
</protein>